<proteinExistence type="inferred from homology"/>
<sequence length="121" mass="13435">MIQQESFLTVADNSGAKRIQCIRVLGSNRRYAHVGDIIVAAVKDAMPNMSVKKSEVVKAVVVRTKATLRRETGNSIRFDDNAAVLINEDKNPRGTRVFGPVARELRERNFTKIVSLAPEVI</sequence>
<feature type="chain" id="PRO_1000055668" description="Large ribosomal subunit protein uL14">
    <location>
        <begin position="1"/>
        <end position="121"/>
    </location>
</feature>
<name>RL14_PROM3</name>
<reference key="1">
    <citation type="journal article" date="2007" name="PLoS Genet.">
        <title>Patterns and implications of gene gain and loss in the evolution of Prochlorococcus.</title>
        <authorList>
            <person name="Kettler G.C."/>
            <person name="Martiny A.C."/>
            <person name="Huang K."/>
            <person name="Zucker J."/>
            <person name="Coleman M.L."/>
            <person name="Rodrigue S."/>
            <person name="Chen F."/>
            <person name="Lapidus A."/>
            <person name="Ferriera S."/>
            <person name="Johnson J."/>
            <person name="Steglich C."/>
            <person name="Church G.M."/>
            <person name="Richardson P."/>
            <person name="Chisholm S.W."/>
        </authorList>
    </citation>
    <scope>NUCLEOTIDE SEQUENCE [LARGE SCALE GENOMIC DNA]</scope>
    <source>
        <strain>MIT 9303</strain>
    </source>
</reference>
<evidence type="ECO:0000255" key="1">
    <source>
        <dbReference type="HAMAP-Rule" id="MF_01367"/>
    </source>
</evidence>
<evidence type="ECO:0000305" key="2"/>
<gene>
    <name evidence="1" type="primary">rplN</name>
    <name evidence="1" type="synonym">rpl14</name>
    <name type="ordered locus">P9303_23121</name>
</gene>
<keyword id="KW-0687">Ribonucleoprotein</keyword>
<keyword id="KW-0689">Ribosomal protein</keyword>
<keyword id="KW-0694">RNA-binding</keyword>
<keyword id="KW-0699">rRNA-binding</keyword>
<protein>
    <recommendedName>
        <fullName evidence="1">Large ribosomal subunit protein uL14</fullName>
    </recommendedName>
    <alternativeName>
        <fullName evidence="2">50S ribosomal protein L14</fullName>
    </alternativeName>
</protein>
<accession>A2CC37</accession>
<comment type="function">
    <text evidence="1">Binds to 23S rRNA. Forms part of two intersubunit bridges in the 70S ribosome.</text>
</comment>
<comment type="subunit">
    <text evidence="1">Part of the 50S ribosomal subunit. Forms a cluster with proteins L3 and L19. In the 70S ribosome, L14 and L19 interact and together make contacts with the 16S rRNA in bridges B5 and B8.</text>
</comment>
<comment type="similarity">
    <text evidence="1">Belongs to the universal ribosomal protein uL14 family.</text>
</comment>
<organism>
    <name type="scientific">Prochlorococcus marinus (strain MIT 9303)</name>
    <dbReference type="NCBI Taxonomy" id="59922"/>
    <lineage>
        <taxon>Bacteria</taxon>
        <taxon>Bacillati</taxon>
        <taxon>Cyanobacteriota</taxon>
        <taxon>Cyanophyceae</taxon>
        <taxon>Synechococcales</taxon>
        <taxon>Prochlorococcaceae</taxon>
        <taxon>Prochlorococcus</taxon>
    </lineage>
</organism>
<dbReference type="EMBL" id="CP000554">
    <property type="protein sequence ID" value="ABM79047.1"/>
    <property type="molecule type" value="Genomic_DNA"/>
</dbReference>
<dbReference type="RefSeq" id="WP_011826913.1">
    <property type="nucleotide sequence ID" value="NC_008820.1"/>
</dbReference>
<dbReference type="SMR" id="A2CC37"/>
<dbReference type="STRING" id="59922.P9303_23121"/>
<dbReference type="KEGG" id="pmf:P9303_23121"/>
<dbReference type="HOGENOM" id="CLU_095071_2_1_3"/>
<dbReference type="BioCyc" id="PMAR59922:G1G80-2029-MONOMER"/>
<dbReference type="Proteomes" id="UP000002274">
    <property type="component" value="Chromosome"/>
</dbReference>
<dbReference type="GO" id="GO:0022625">
    <property type="term" value="C:cytosolic large ribosomal subunit"/>
    <property type="evidence" value="ECO:0007669"/>
    <property type="project" value="TreeGrafter"/>
</dbReference>
<dbReference type="GO" id="GO:0070180">
    <property type="term" value="F:large ribosomal subunit rRNA binding"/>
    <property type="evidence" value="ECO:0007669"/>
    <property type="project" value="TreeGrafter"/>
</dbReference>
<dbReference type="GO" id="GO:0003735">
    <property type="term" value="F:structural constituent of ribosome"/>
    <property type="evidence" value="ECO:0007669"/>
    <property type="project" value="InterPro"/>
</dbReference>
<dbReference type="GO" id="GO:0006412">
    <property type="term" value="P:translation"/>
    <property type="evidence" value="ECO:0007669"/>
    <property type="project" value="UniProtKB-UniRule"/>
</dbReference>
<dbReference type="CDD" id="cd00337">
    <property type="entry name" value="Ribosomal_uL14"/>
    <property type="match status" value="1"/>
</dbReference>
<dbReference type="FunFam" id="2.40.150.20:FF:000001">
    <property type="entry name" value="50S ribosomal protein L14"/>
    <property type="match status" value="1"/>
</dbReference>
<dbReference type="Gene3D" id="2.40.150.20">
    <property type="entry name" value="Ribosomal protein L14"/>
    <property type="match status" value="1"/>
</dbReference>
<dbReference type="HAMAP" id="MF_01367">
    <property type="entry name" value="Ribosomal_uL14"/>
    <property type="match status" value="1"/>
</dbReference>
<dbReference type="InterPro" id="IPR000218">
    <property type="entry name" value="Ribosomal_uL14"/>
</dbReference>
<dbReference type="InterPro" id="IPR005745">
    <property type="entry name" value="Ribosomal_uL14_bac-type"/>
</dbReference>
<dbReference type="InterPro" id="IPR036853">
    <property type="entry name" value="Ribosomal_uL14_sf"/>
</dbReference>
<dbReference type="NCBIfam" id="TIGR01067">
    <property type="entry name" value="rplN_bact"/>
    <property type="match status" value="1"/>
</dbReference>
<dbReference type="PANTHER" id="PTHR11761">
    <property type="entry name" value="50S/60S RIBOSOMAL PROTEIN L14/L23"/>
    <property type="match status" value="1"/>
</dbReference>
<dbReference type="PANTHER" id="PTHR11761:SF3">
    <property type="entry name" value="LARGE RIBOSOMAL SUBUNIT PROTEIN UL14M"/>
    <property type="match status" value="1"/>
</dbReference>
<dbReference type="Pfam" id="PF00238">
    <property type="entry name" value="Ribosomal_L14"/>
    <property type="match status" value="1"/>
</dbReference>
<dbReference type="SMART" id="SM01374">
    <property type="entry name" value="Ribosomal_L14"/>
    <property type="match status" value="1"/>
</dbReference>
<dbReference type="SUPFAM" id="SSF50193">
    <property type="entry name" value="Ribosomal protein L14"/>
    <property type="match status" value="1"/>
</dbReference>